<reference key="1">
    <citation type="journal article" date="2004" name="Nature">
        <title>Genome evolution in yeasts.</title>
        <authorList>
            <person name="Dujon B."/>
            <person name="Sherman D."/>
            <person name="Fischer G."/>
            <person name="Durrens P."/>
            <person name="Casaregola S."/>
            <person name="Lafontaine I."/>
            <person name="de Montigny J."/>
            <person name="Marck C."/>
            <person name="Neuveglise C."/>
            <person name="Talla E."/>
            <person name="Goffard N."/>
            <person name="Frangeul L."/>
            <person name="Aigle M."/>
            <person name="Anthouard V."/>
            <person name="Babour A."/>
            <person name="Barbe V."/>
            <person name="Barnay S."/>
            <person name="Blanchin S."/>
            <person name="Beckerich J.-M."/>
            <person name="Beyne E."/>
            <person name="Bleykasten C."/>
            <person name="Boisrame A."/>
            <person name="Boyer J."/>
            <person name="Cattolico L."/>
            <person name="Confanioleri F."/>
            <person name="de Daruvar A."/>
            <person name="Despons L."/>
            <person name="Fabre E."/>
            <person name="Fairhead C."/>
            <person name="Ferry-Dumazet H."/>
            <person name="Groppi A."/>
            <person name="Hantraye F."/>
            <person name="Hennequin C."/>
            <person name="Jauniaux N."/>
            <person name="Joyet P."/>
            <person name="Kachouri R."/>
            <person name="Kerrest A."/>
            <person name="Koszul R."/>
            <person name="Lemaire M."/>
            <person name="Lesur I."/>
            <person name="Ma L."/>
            <person name="Muller H."/>
            <person name="Nicaud J.-M."/>
            <person name="Nikolski M."/>
            <person name="Oztas S."/>
            <person name="Ozier-Kalogeropoulos O."/>
            <person name="Pellenz S."/>
            <person name="Potier S."/>
            <person name="Richard G.-F."/>
            <person name="Straub M.-L."/>
            <person name="Suleau A."/>
            <person name="Swennen D."/>
            <person name="Tekaia F."/>
            <person name="Wesolowski-Louvel M."/>
            <person name="Westhof E."/>
            <person name="Wirth B."/>
            <person name="Zeniou-Meyer M."/>
            <person name="Zivanovic Y."/>
            <person name="Bolotin-Fukuhara M."/>
            <person name="Thierry A."/>
            <person name="Bouchier C."/>
            <person name="Caudron B."/>
            <person name="Scarpelli C."/>
            <person name="Gaillardin C."/>
            <person name="Weissenbach J."/>
            <person name="Wincker P."/>
            <person name="Souciet J.-L."/>
        </authorList>
    </citation>
    <scope>NUCLEOTIDE SEQUENCE [LARGE SCALE GENOMIC DNA]</scope>
    <source>
        <strain>ATCC 2001 / BCRC 20586 / JCM 3761 / NBRC 0622 / NRRL Y-65 / CBS 138</strain>
    </source>
</reference>
<gene>
    <name type="primary">RPN11</name>
    <name type="ordered locus">CAGL0L09152g</name>
</gene>
<comment type="function">
    <text evidence="1">Acts as a regulatory subunit of the 26 proteasome which is involved in the ATP-dependent degradation of ubiquitinated proteins.</text>
</comment>
<comment type="similarity">
    <text evidence="3">Belongs to the peptidase M67A family.</text>
</comment>
<accession>Q6FKS1</accession>
<organism>
    <name type="scientific">Candida glabrata (strain ATCC 2001 / BCRC 20586 / JCM 3761 / NBRC 0622 / NRRL Y-65 / CBS 138)</name>
    <name type="common">Yeast</name>
    <name type="synonym">Nakaseomyces glabratus</name>
    <dbReference type="NCBI Taxonomy" id="284593"/>
    <lineage>
        <taxon>Eukaryota</taxon>
        <taxon>Fungi</taxon>
        <taxon>Dikarya</taxon>
        <taxon>Ascomycota</taxon>
        <taxon>Saccharomycotina</taxon>
        <taxon>Saccharomycetes</taxon>
        <taxon>Saccharomycetales</taxon>
        <taxon>Saccharomycetaceae</taxon>
        <taxon>Nakaseomyces</taxon>
    </lineage>
</organism>
<dbReference type="EMBL" id="CR380958">
    <property type="protein sequence ID" value="CAG62143.1"/>
    <property type="molecule type" value="Genomic_DNA"/>
</dbReference>
<dbReference type="RefSeq" id="XP_449173.1">
    <property type="nucleotide sequence ID" value="XM_449173.1"/>
</dbReference>
<dbReference type="SMR" id="Q6FKS1"/>
<dbReference type="FunCoup" id="Q6FKS1">
    <property type="interactions" value="1415"/>
</dbReference>
<dbReference type="STRING" id="284593.Q6FKS1"/>
<dbReference type="MEROPS" id="M67.001"/>
<dbReference type="EnsemblFungi" id="CAGL0L09152g-T">
    <property type="protein sequence ID" value="CAGL0L09152g-T-p1"/>
    <property type="gene ID" value="CAGL0L09152g"/>
</dbReference>
<dbReference type="KEGG" id="cgr:2891118"/>
<dbReference type="CGD" id="CAL0135776">
    <property type="gene designation" value="CAGL0L09152g"/>
</dbReference>
<dbReference type="VEuPathDB" id="FungiDB:B1J91_L09152g"/>
<dbReference type="VEuPathDB" id="FungiDB:CAGL0L09152g"/>
<dbReference type="eggNOG" id="KOG1555">
    <property type="taxonomic scope" value="Eukaryota"/>
</dbReference>
<dbReference type="HOGENOM" id="CLU_052991_0_1_1"/>
<dbReference type="InParanoid" id="Q6FKS1"/>
<dbReference type="OMA" id="KTGRHEM"/>
<dbReference type="Proteomes" id="UP000002428">
    <property type="component" value="Chromosome L"/>
</dbReference>
<dbReference type="GO" id="GO:0005829">
    <property type="term" value="C:cytosol"/>
    <property type="evidence" value="ECO:0007669"/>
    <property type="project" value="EnsemblFungi"/>
</dbReference>
<dbReference type="GO" id="GO:0005739">
    <property type="term" value="C:mitochondrion"/>
    <property type="evidence" value="ECO:0007669"/>
    <property type="project" value="EnsemblFungi"/>
</dbReference>
<dbReference type="GO" id="GO:0034399">
    <property type="term" value="C:nuclear periphery"/>
    <property type="evidence" value="ECO:0007669"/>
    <property type="project" value="EnsemblFungi"/>
</dbReference>
<dbReference type="GO" id="GO:0008541">
    <property type="term" value="C:proteasome regulatory particle, lid subcomplex"/>
    <property type="evidence" value="ECO:0007669"/>
    <property type="project" value="EnsemblFungi"/>
</dbReference>
<dbReference type="GO" id="GO:0034515">
    <property type="term" value="C:proteasome storage granule"/>
    <property type="evidence" value="ECO:0007669"/>
    <property type="project" value="EnsemblFungi"/>
</dbReference>
<dbReference type="GO" id="GO:0046872">
    <property type="term" value="F:metal ion binding"/>
    <property type="evidence" value="ECO:0007669"/>
    <property type="project" value="UniProtKB-KW"/>
</dbReference>
<dbReference type="GO" id="GO:0140492">
    <property type="term" value="F:metal-dependent deubiquitinase activity"/>
    <property type="evidence" value="ECO:0007669"/>
    <property type="project" value="EnsemblFungi"/>
</dbReference>
<dbReference type="GO" id="GO:0000266">
    <property type="term" value="P:mitochondrial fission"/>
    <property type="evidence" value="ECO:0007669"/>
    <property type="project" value="EnsemblFungi"/>
</dbReference>
<dbReference type="GO" id="GO:0016559">
    <property type="term" value="P:peroxisome fission"/>
    <property type="evidence" value="ECO:0007669"/>
    <property type="project" value="EnsemblFungi"/>
</dbReference>
<dbReference type="GO" id="GO:0043248">
    <property type="term" value="P:proteasome assembly"/>
    <property type="evidence" value="ECO:0007669"/>
    <property type="project" value="EnsemblFungi"/>
</dbReference>
<dbReference type="GO" id="GO:1902906">
    <property type="term" value="P:proteasome storage granule assembly"/>
    <property type="evidence" value="ECO:0007669"/>
    <property type="project" value="EnsemblFungi"/>
</dbReference>
<dbReference type="GO" id="GO:0043161">
    <property type="term" value="P:proteasome-mediated ubiquitin-dependent protein catabolic process"/>
    <property type="evidence" value="ECO:0007669"/>
    <property type="project" value="EnsemblFungi"/>
</dbReference>
<dbReference type="GO" id="GO:0016579">
    <property type="term" value="P:protein deubiquitination"/>
    <property type="evidence" value="ECO:0007669"/>
    <property type="project" value="EnsemblFungi"/>
</dbReference>
<dbReference type="CDD" id="cd08069">
    <property type="entry name" value="MPN_RPN11_CSN5"/>
    <property type="match status" value="1"/>
</dbReference>
<dbReference type="FunFam" id="3.40.140.10:FF:000001">
    <property type="entry name" value="26S proteasome non-ATPase regulatory subunit"/>
    <property type="match status" value="1"/>
</dbReference>
<dbReference type="Gene3D" id="3.40.140.10">
    <property type="entry name" value="Cytidine Deaminase, domain 2"/>
    <property type="match status" value="1"/>
</dbReference>
<dbReference type="InterPro" id="IPR000555">
    <property type="entry name" value="JAMM/MPN+_dom"/>
</dbReference>
<dbReference type="InterPro" id="IPR050242">
    <property type="entry name" value="JAMM_MPN+_peptidase_M67A"/>
</dbReference>
<dbReference type="InterPro" id="IPR037518">
    <property type="entry name" value="MPN"/>
</dbReference>
<dbReference type="InterPro" id="IPR056263">
    <property type="entry name" value="RPN11_C"/>
</dbReference>
<dbReference type="PANTHER" id="PTHR10410">
    <property type="entry name" value="EUKARYOTIC TRANSLATION INITIATION FACTOR 3 -RELATED"/>
    <property type="match status" value="1"/>
</dbReference>
<dbReference type="Pfam" id="PF01398">
    <property type="entry name" value="JAB"/>
    <property type="match status" value="1"/>
</dbReference>
<dbReference type="Pfam" id="PF23594">
    <property type="entry name" value="RPN11_C"/>
    <property type="match status" value="1"/>
</dbReference>
<dbReference type="SMART" id="SM00232">
    <property type="entry name" value="JAB_MPN"/>
    <property type="match status" value="1"/>
</dbReference>
<dbReference type="SUPFAM" id="SSF102712">
    <property type="entry name" value="JAB1/MPN domain"/>
    <property type="match status" value="1"/>
</dbReference>
<dbReference type="PROSITE" id="PS50249">
    <property type="entry name" value="MPN"/>
    <property type="match status" value="1"/>
</dbReference>
<evidence type="ECO:0000250" key="1"/>
<evidence type="ECO:0000255" key="2">
    <source>
        <dbReference type="PROSITE-ProRule" id="PRU01182"/>
    </source>
</evidence>
<evidence type="ECO:0000305" key="3"/>
<sequence>MERLQRLMMNTKVGAADANKDDTKETVYISSIALLKMLKHGRAGVPMEVMGLMLGEFVDEYTVNVVDVFAMPQSGTGVSVEAVDDVFQARMMDMLKQTGRDQMVVGWYHSHPGFGCWLSSVDVNTQKSFEQLNNRAVAVVVDPIQSVKGKVVIDAFRLIDTGALINNQEPRQTTSNSGLMNKANIQALIHGLNRHYYSLNIDYHKTPAETKMLLNLHKEQWQSGLKMQDYQEKETENLEATKRMVAVAQQYSKRIEEEKELSEEELKTRYVGKQDPKKHLAKTAENTLEENTVSVLTAGVNSIAIK</sequence>
<name>RPN11_CANGA</name>
<feature type="chain" id="PRO_0000213958" description="26S proteasome regulatory subunit RPN11">
    <location>
        <begin position="1"/>
        <end position="306"/>
    </location>
</feature>
<feature type="domain" description="MPN" evidence="2">
    <location>
        <begin position="27"/>
        <end position="162"/>
    </location>
</feature>
<feature type="short sequence motif" description="JAMM motif" evidence="2">
    <location>
        <begin position="109"/>
        <end position="122"/>
    </location>
</feature>
<feature type="binding site" evidence="2">
    <location>
        <position position="109"/>
    </location>
    <ligand>
        <name>Zn(2+)</name>
        <dbReference type="ChEBI" id="CHEBI:29105"/>
        <note>catalytic</note>
    </ligand>
</feature>
<feature type="binding site" evidence="2">
    <location>
        <position position="111"/>
    </location>
    <ligand>
        <name>Zn(2+)</name>
        <dbReference type="ChEBI" id="CHEBI:29105"/>
        <note>catalytic</note>
    </ligand>
</feature>
<feature type="binding site" evidence="2">
    <location>
        <position position="122"/>
    </location>
    <ligand>
        <name>Zn(2+)</name>
        <dbReference type="ChEBI" id="CHEBI:29105"/>
        <note>catalytic</note>
    </ligand>
</feature>
<protein>
    <recommendedName>
        <fullName>26S proteasome regulatory subunit RPN11</fullName>
    </recommendedName>
</protein>
<keyword id="KW-0378">Hydrolase</keyword>
<keyword id="KW-0479">Metal-binding</keyword>
<keyword id="KW-0482">Metalloprotease</keyword>
<keyword id="KW-0645">Protease</keyword>
<keyword id="KW-0647">Proteasome</keyword>
<keyword id="KW-1185">Reference proteome</keyword>
<keyword id="KW-0862">Zinc</keyword>
<proteinExistence type="inferred from homology"/>